<evidence type="ECO:0000255" key="1"/>
<evidence type="ECO:0000305" key="2"/>
<keyword id="KW-1003">Cell membrane</keyword>
<keyword id="KW-0472">Membrane</keyword>
<keyword id="KW-1185">Reference proteome</keyword>
<keyword id="KW-0812">Transmembrane</keyword>
<keyword id="KW-1133">Transmembrane helix</keyword>
<comment type="subcellular location">
    <subcellularLocation>
        <location evidence="2">Cell membrane</location>
        <topology evidence="2">Multi-pass membrane protein</topology>
    </subcellularLocation>
</comment>
<comment type="similarity">
    <text evidence="2">Belongs to the UPF0132 family.</text>
</comment>
<sequence length="95" mass="10476">MCYTLGFVTGVLFLLFDRSPFVRFHAVQSTLTFSTITALVILLPVLPGGALLSRVVMAFSIILWAFCIVKASRGEAFKLPIFGDIAEEQLSLNYT</sequence>
<name>Y736_ARCFU</name>
<protein>
    <recommendedName>
        <fullName>UPF0132 membrane protein AF_0736</fullName>
    </recommendedName>
</protein>
<gene>
    <name type="ordered locus">AF_0736</name>
</gene>
<feature type="chain" id="PRO_0000158605" description="UPF0132 membrane protein AF_0736">
    <location>
        <begin position="1"/>
        <end position="95"/>
    </location>
</feature>
<feature type="transmembrane region" description="Helical" evidence="1">
    <location>
        <begin position="2"/>
        <end position="22"/>
    </location>
</feature>
<feature type="transmembrane region" description="Helical" evidence="1">
    <location>
        <begin position="32"/>
        <end position="52"/>
    </location>
</feature>
<feature type="transmembrane region" description="Helical" evidence="1">
    <location>
        <begin position="55"/>
        <end position="75"/>
    </location>
</feature>
<reference key="1">
    <citation type="journal article" date="1997" name="Nature">
        <title>The complete genome sequence of the hyperthermophilic, sulphate-reducing archaeon Archaeoglobus fulgidus.</title>
        <authorList>
            <person name="Klenk H.-P."/>
            <person name="Clayton R.A."/>
            <person name="Tomb J.-F."/>
            <person name="White O."/>
            <person name="Nelson K.E."/>
            <person name="Ketchum K.A."/>
            <person name="Dodson R.J."/>
            <person name="Gwinn M.L."/>
            <person name="Hickey E.K."/>
            <person name="Peterson J.D."/>
            <person name="Richardson D.L."/>
            <person name="Kerlavage A.R."/>
            <person name="Graham D.E."/>
            <person name="Kyrpides N.C."/>
            <person name="Fleischmann R.D."/>
            <person name="Quackenbush J."/>
            <person name="Lee N.H."/>
            <person name="Sutton G.G."/>
            <person name="Gill S.R."/>
            <person name="Kirkness E.F."/>
            <person name="Dougherty B.A."/>
            <person name="McKenney K."/>
            <person name="Adams M.D."/>
            <person name="Loftus B.J."/>
            <person name="Peterson S.N."/>
            <person name="Reich C.I."/>
            <person name="McNeil L.K."/>
            <person name="Badger J.H."/>
            <person name="Glodek A."/>
            <person name="Zhou L."/>
            <person name="Overbeek R."/>
            <person name="Gocayne J.D."/>
            <person name="Weidman J.F."/>
            <person name="McDonald L.A."/>
            <person name="Utterback T.R."/>
            <person name="Cotton M.D."/>
            <person name="Spriggs T."/>
            <person name="Artiach P."/>
            <person name="Kaine B.P."/>
            <person name="Sykes S.M."/>
            <person name="Sadow P.W."/>
            <person name="D'Andrea K.P."/>
            <person name="Bowman C."/>
            <person name="Fujii C."/>
            <person name="Garland S.A."/>
            <person name="Mason T.M."/>
            <person name="Olsen G.J."/>
            <person name="Fraser C.M."/>
            <person name="Smith H.O."/>
            <person name="Woese C.R."/>
            <person name="Venter J.C."/>
        </authorList>
    </citation>
    <scope>NUCLEOTIDE SEQUENCE [LARGE SCALE GENOMIC DNA]</scope>
    <source>
        <strain>ATCC 49558 / DSM 4304 / JCM 9628 / NBRC 100126 / VC-16</strain>
    </source>
</reference>
<dbReference type="EMBL" id="AE000782">
    <property type="protein sequence ID" value="AAB90510.1"/>
    <property type="molecule type" value="Genomic_DNA"/>
</dbReference>
<dbReference type="PIR" id="H69341">
    <property type="entry name" value="H69341"/>
</dbReference>
<dbReference type="SMR" id="O29522"/>
<dbReference type="STRING" id="224325.AF_0736"/>
<dbReference type="PaxDb" id="224325-AF_0736"/>
<dbReference type="EnsemblBacteria" id="AAB90510">
    <property type="protein sequence ID" value="AAB90510"/>
    <property type="gene ID" value="AF_0736"/>
</dbReference>
<dbReference type="KEGG" id="afu:AF_0736"/>
<dbReference type="eggNOG" id="arCOG04344">
    <property type="taxonomic scope" value="Archaea"/>
</dbReference>
<dbReference type="HOGENOM" id="CLU_095018_3_0_2"/>
<dbReference type="PhylomeDB" id="O29522"/>
<dbReference type="Proteomes" id="UP000002199">
    <property type="component" value="Chromosome"/>
</dbReference>
<dbReference type="GO" id="GO:0005886">
    <property type="term" value="C:plasma membrane"/>
    <property type="evidence" value="ECO:0007669"/>
    <property type="project" value="UniProtKB-SubCell"/>
</dbReference>
<dbReference type="PANTHER" id="PTHR36460">
    <property type="entry name" value="UPF0132 DOMAIN PROTEIN (AFU_ORTHOLOGUE AFUA_3G10255)"/>
    <property type="match status" value="1"/>
</dbReference>
<dbReference type="PANTHER" id="PTHR36460:SF1">
    <property type="entry name" value="UPF0132 DOMAIN PROTEIN (AFU_ORTHOLOGUE AFUA_3G10255)"/>
    <property type="match status" value="1"/>
</dbReference>
<proteinExistence type="inferred from homology"/>
<organism>
    <name type="scientific">Archaeoglobus fulgidus (strain ATCC 49558 / DSM 4304 / JCM 9628 / NBRC 100126 / VC-16)</name>
    <dbReference type="NCBI Taxonomy" id="224325"/>
    <lineage>
        <taxon>Archaea</taxon>
        <taxon>Methanobacteriati</taxon>
        <taxon>Methanobacteriota</taxon>
        <taxon>Archaeoglobi</taxon>
        <taxon>Archaeoglobales</taxon>
        <taxon>Archaeoglobaceae</taxon>
        <taxon>Archaeoglobus</taxon>
    </lineage>
</organism>
<accession>O29522</accession>